<organism>
    <name type="scientific">Burkholderia orbicola (strain MC0-3)</name>
    <dbReference type="NCBI Taxonomy" id="406425"/>
    <lineage>
        <taxon>Bacteria</taxon>
        <taxon>Pseudomonadati</taxon>
        <taxon>Pseudomonadota</taxon>
        <taxon>Betaproteobacteria</taxon>
        <taxon>Burkholderiales</taxon>
        <taxon>Burkholderiaceae</taxon>
        <taxon>Burkholderia</taxon>
        <taxon>Burkholderia cepacia complex</taxon>
        <taxon>Burkholderia orbicola</taxon>
    </lineage>
</organism>
<reference key="1">
    <citation type="submission" date="2008-02" db="EMBL/GenBank/DDBJ databases">
        <title>Complete sequence of chromosome 1 of Burkholderia cenocepacia MC0-3.</title>
        <authorList>
            <person name="Copeland A."/>
            <person name="Lucas S."/>
            <person name="Lapidus A."/>
            <person name="Barry K."/>
            <person name="Bruce D."/>
            <person name="Goodwin L."/>
            <person name="Glavina del Rio T."/>
            <person name="Dalin E."/>
            <person name="Tice H."/>
            <person name="Pitluck S."/>
            <person name="Chain P."/>
            <person name="Malfatti S."/>
            <person name="Shin M."/>
            <person name="Vergez L."/>
            <person name="Schmutz J."/>
            <person name="Larimer F."/>
            <person name="Land M."/>
            <person name="Hauser L."/>
            <person name="Kyrpides N."/>
            <person name="Mikhailova N."/>
            <person name="Tiedje J."/>
            <person name="Richardson P."/>
        </authorList>
    </citation>
    <scope>NUCLEOTIDE SEQUENCE [LARGE SCALE GENOMIC DNA]</scope>
    <source>
        <strain>MC0-3</strain>
    </source>
</reference>
<dbReference type="EC" id="2.1.1.195" evidence="1"/>
<dbReference type="EMBL" id="CP000958">
    <property type="protein sequence ID" value="ACA90822.1"/>
    <property type="molecule type" value="Genomic_DNA"/>
</dbReference>
<dbReference type="RefSeq" id="WP_012328487.1">
    <property type="nucleotide sequence ID" value="NC_010508.1"/>
</dbReference>
<dbReference type="SMR" id="B1K168"/>
<dbReference type="GeneID" id="83048443"/>
<dbReference type="KEGG" id="bcm:Bcenmc03_1649"/>
<dbReference type="HOGENOM" id="CLU_041273_0_0_4"/>
<dbReference type="UniPathway" id="UPA00148">
    <property type="reaction ID" value="UER00227"/>
</dbReference>
<dbReference type="Proteomes" id="UP000002169">
    <property type="component" value="Chromosome 1"/>
</dbReference>
<dbReference type="GO" id="GO:0043780">
    <property type="term" value="F:cobalt-precorrin-5B C1-methyltransferase activity"/>
    <property type="evidence" value="ECO:0007669"/>
    <property type="project" value="RHEA"/>
</dbReference>
<dbReference type="GO" id="GO:0019251">
    <property type="term" value="P:anaerobic cobalamin biosynthetic process"/>
    <property type="evidence" value="ECO:0007669"/>
    <property type="project" value="UniProtKB-UniRule"/>
</dbReference>
<dbReference type="GO" id="GO:0032259">
    <property type="term" value="P:methylation"/>
    <property type="evidence" value="ECO:0007669"/>
    <property type="project" value="UniProtKB-KW"/>
</dbReference>
<dbReference type="Gene3D" id="3.30.2110.10">
    <property type="entry name" value="CbiD-like"/>
    <property type="match status" value="1"/>
</dbReference>
<dbReference type="HAMAP" id="MF_00787">
    <property type="entry name" value="CbiD"/>
    <property type="match status" value="1"/>
</dbReference>
<dbReference type="InterPro" id="IPR002748">
    <property type="entry name" value="CbiD"/>
</dbReference>
<dbReference type="InterPro" id="IPR036074">
    <property type="entry name" value="CbiD_sf"/>
</dbReference>
<dbReference type="NCBIfam" id="TIGR00312">
    <property type="entry name" value="cbiD"/>
    <property type="match status" value="1"/>
</dbReference>
<dbReference type="NCBIfam" id="NF000849">
    <property type="entry name" value="PRK00075.1-1"/>
    <property type="match status" value="1"/>
</dbReference>
<dbReference type="PANTHER" id="PTHR35863">
    <property type="entry name" value="COBALT-PRECORRIN-5B C(1)-METHYLTRANSFERASE"/>
    <property type="match status" value="1"/>
</dbReference>
<dbReference type="PANTHER" id="PTHR35863:SF1">
    <property type="entry name" value="COBALT-PRECORRIN-5B C(1)-METHYLTRANSFERASE"/>
    <property type="match status" value="1"/>
</dbReference>
<dbReference type="Pfam" id="PF01888">
    <property type="entry name" value="CbiD"/>
    <property type="match status" value="1"/>
</dbReference>
<dbReference type="PIRSF" id="PIRSF026782">
    <property type="entry name" value="CbiD"/>
    <property type="match status" value="1"/>
</dbReference>
<dbReference type="SUPFAM" id="SSF111342">
    <property type="entry name" value="CbiD-like"/>
    <property type="match status" value="1"/>
</dbReference>
<keyword id="KW-0169">Cobalamin biosynthesis</keyword>
<keyword id="KW-0489">Methyltransferase</keyword>
<keyword id="KW-0949">S-adenosyl-L-methionine</keyword>
<keyword id="KW-0808">Transferase</keyword>
<gene>
    <name evidence="1" type="primary">cbiD</name>
    <name type="ordered locus">Bcenmc03_1649</name>
</gene>
<protein>
    <recommendedName>
        <fullName evidence="1">Cobalt-precorrin-5B C(1)-methyltransferase</fullName>
        <ecNumber evidence="1">2.1.1.195</ecNumber>
    </recommendedName>
    <alternativeName>
        <fullName evidence="1">Cobalt-precorrin-6A synthase</fullName>
    </alternativeName>
</protein>
<name>CBID_BURO0</name>
<evidence type="ECO:0000255" key="1">
    <source>
        <dbReference type="HAMAP-Rule" id="MF_00787"/>
    </source>
</evidence>
<proteinExistence type="inferred from homology"/>
<sequence length="362" mass="37584">MRDETPEQPAPLRFGYTTGSCATATSLAAARLLLAGQADDAVEIVLPKGQRVMMRLEFCRATADGAEAGTIKDAGDDPDVTHGALIFARVALAAAPGVRFHAGPGVGTVTRAGLMLPVGEPAINPVPRQMMTTHLEALAAEHGYAGGFDVTIGVEGGEMLALKTMNPRLGIVGGLSILGTTGIVRPFSCSAYIASIHQGIDVARANGIAHIAACTGNASEDAMRAHYQLPDMALIEMGDFAGAVLKHLRRAPVARLSMCGGFGKLSKLAAGHLDLHSRHSSIDLPLLAQWAAEAGANDALQAAMRAANTSQEALKLAQADGVPLGDLVCAHALRVARDIVPPSVVIEMFAIDRQGRFVGVAR</sequence>
<comment type="function">
    <text evidence="1">Catalyzes the methylation of C-1 in cobalt-precorrin-5B to form cobalt-precorrin-6A.</text>
</comment>
<comment type="catalytic activity">
    <reaction evidence="1">
        <text>Co-precorrin-5B + S-adenosyl-L-methionine = Co-precorrin-6A + S-adenosyl-L-homocysteine</text>
        <dbReference type="Rhea" id="RHEA:26285"/>
        <dbReference type="ChEBI" id="CHEBI:57856"/>
        <dbReference type="ChEBI" id="CHEBI:59789"/>
        <dbReference type="ChEBI" id="CHEBI:60063"/>
        <dbReference type="ChEBI" id="CHEBI:60064"/>
        <dbReference type="EC" id="2.1.1.195"/>
    </reaction>
</comment>
<comment type="pathway">
    <text evidence="1">Cofactor biosynthesis; adenosylcobalamin biosynthesis; cob(II)yrinate a,c-diamide from sirohydrochlorin (anaerobic route): step 6/10.</text>
</comment>
<comment type="similarity">
    <text evidence="1">Belongs to the CbiD family.</text>
</comment>
<accession>B1K168</accession>
<feature type="chain" id="PRO_1000133728" description="Cobalt-precorrin-5B C(1)-methyltransferase">
    <location>
        <begin position="1"/>
        <end position="362"/>
    </location>
</feature>